<organismHost>
    <name type="scientific">Homo sapiens</name>
    <name type="common">Human</name>
    <dbReference type="NCBI Taxonomy" id="9606"/>
</organismHost>
<comment type="function">
    <text evidence="1">Plays a role in the inhibition of host innate immunity by inducing the degradation of key host factors required to activate interferon production such as IRF3, IRF5 or IRF7. Associates with components of cullin RING ligases (CRLs) including CUL1 or CUL3, which are essential multisubunit ubiquitination complexes, to modulate their activities.</text>
</comment>
<comment type="subunit">
    <text evidence="1">Interacts (via C-terminus) with host IRF3; this interaction leads to IRF3 degradation. Interacts with host IRF7; this interaction leads to IRF7 degradation. Interacts with host CUL1 and CUL3.</text>
</comment>
<comment type="subcellular location">
    <subcellularLocation>
        <location evidence="1">Host cytoplasm</location>
        <location evidence="1">Host cytoskeleton</location>
    </subcellularLocation>
</comment>
<comment type="domain">
    <text evidence="1">The integrity of the zinc-binding domain in NSP1 is important for degradation of host IRF3.</text>
</comment>
<comment type="domain">
    <text evidence="1">The pLxIS motif targets host IRF3 for degradation; however phosphorylation of NSP1 pLxIS motif is not required for its activity.</text>
</comment>
<comment type="similarity">
    <text evidence="1">Belongs to the rotavirus NSP1 family.</text>
</comment>
<protein>
    <recommendedName>
        <fullName evidence="1">Non-structural protein 1</fullName>
        <shortName evidence="1">NSP1</shortName>
    </recommendedName>
    <alternativeName>
        <fullName evidence="1">NCVP2</fullName>
    </alternativeName>
    <alternativeName>
        <fullName evidence="1">Non-structural RNA-binding protein 53</fullName>
        <shortName evidence="1">NS53</shortName>
    </alternativeName>
</protein>
<keyword id="KW-1035">Host cytoplasm</keyword>
<keyword id="KW-1037">Host cytoskeleton</keyword>
<keyword id="KW-0945">Host-virus interaction</keyword>
<keyword id="KW-1090">Inhibition of host innate immune response by virus</keyword>
<keyword id="KW-1092">Inhibition of host IRF3 by virus</keyword>
<keyword id="KW-1093">Inhibition of host IRF7 by virus</keyword>
<keyword id="KW-1113">Inhibition of host RLR pathway by virus</keyword>
<keyword id="KW-0922">Interferon antiviral system evasion</keyword>
<keyword id="KW-0479">Metal-binding</keyword>
<keyword id="KW-0694">RNA-binding</keyword>
<keyword id="KW-0899">Viral immunoevasion</keyword>
<accession>Q3ZK61</accession>
<dbReference type="EMBL" id="AY740735">
    <property type="protein sequence ID" value="AAU43793.1"/>
    <property type="molecule type" value="Genomic_RNA"/>
</dbReference>
<dbReference type="Proteomes" id="UP000008655">
    <property type="component" value="Genome"/>
</dbReference>
<dbReference type="GO" id="GO:0030430">
    <property type="term" value="C:host cell cytoplasm"/>
    <property type="evidence" value="ECO:0007669"/>
    <property type="project" value="UniProtKB-UniRule"/>
</dbReference>
<dbReference type="GO" id="GO:0044163">
    <property type="term" value="C:host cytoskeleton"/>
    <property type="evidence" value="ECO:0007669"/>
    <property type="project" value="UniProtKB-SubCell"/>
</dbReference>
<dbReference type="GO" id="GO:0046872">
    <property type="term" value="F:metal ion binding"/>
    <property type="evidence" value="ECO:0007669"/>
    <property type="project" value="UniProtKB-UniRule"/>
</dbReference>
<dbReference type="GO" id="GO:0003723">
    <property type="term" value="F:RNA binding"/>
    <property type="evidence" value="ECO:0007669"/>
    <property type="project" value="UniProtKB-UniRule"/>
</dbReference>
<dbReference type="GO" id="GO:0039548">
    <property type="term" value="P:symbiont-mediated suppression of host cytoplasmic pattern recognition receptor signaling pathway via inhibition of IRF3 activity"/>
    <property type="evidence" value="ECO:0007669"/>
    <property type="project" value="UniProtKB-UniRule"/>
</dbReference>
<dbReference type="GO" id="GO:0039557">
    <property type="term" value="P:symbiont-mediated suppression of host cytoplasmic pattern recognition receptor signaling pathway via inhibition of IRF7 activity"/>
    <property type="evidence" value="ECO:0007669"/>
    <property type="project" value="UniProtKB-UniRule"/>
</dbReference>
<dbReference type="HAMAP" id="MF_04088">
    <property type="entry name" value="ROTA_NSP1"/>
    <property type="match status" value="1"/>
</dbReference>
<dbReference type="InterPro" id="IPR002148">
    <property type="entry name" value="Rotavirus_NSP1"/>
</dbReference>
<dbReference type="Pfam" id="PF00981">
    <property type="entry name" value="Rota_NS53"/>
    <property type="match status" value="1"/>
</dbReference>
<proteinExistence type="inferred from homology"/>
<feature type="chain" id="PRO_0000369073" description="Non-structural protein 1">
    <location>
        <begin position="1"/>
        <end position="492"/>
    </location>
</feature>
<feature type="region of interest" description="RNA-binding" evidence="1">
    <location>
        <begin position="1"/>
        <end position="81"/>
    </location>
</feature>
<feature type="region of interest" description="Zinc-binding domain" evidence="1">
    <location>
        <begin position="42"/>
        <end position="79"/>
    </location>
</feature>
<feature type="region of interest" description="Important for cytoskeleton localization" evidence="1">
    <location>
        <begin position="82"/>
        <end position="176"/>
    </location>
</feature>
<feature type="region of interest" description="Interaction with host IRF3" evidence="1">
    <location>
        <begin position="318"/>
        <end position="492"/>
    </location>
</feature>
<feature type="short sequence motif" description="pLxIS motif" evidence="1">
    <location>
        <begin position="483"/>
        <end position="486"/>
    </location>
</feature>
<sequence length="492" mass="57839">MATFKDACFHYRRITKLNRELLRIGANSVWTPVSTNKIKGWCVECCQLTELTFCHGCSLAHVCQWCIQNKRCFLDNEPHLLKLRTFESPITKEKLQCIINLYNMLFPINSSIINKFRKTVKQRKCRNEIDRSWYNQLLLPITLNAAVFKFHSREVYIFGFYEGSSSCVNLPYRLVNCIDLYDKLLLDQINFDRMSSLPANLQSIYANKYFKLSRLPSMKLKQIYYSDFSKQNLVNKYKSKSRMVLRNLTEFTWDSQLNLHYDLLNNKDKILAALSTSSLKQFETHDLNLGRIKADVFELGRHCKPNYISSNHWQPASTISQCKWCNVKYAFRNMDWKMESMYNELLSFIQSCYKSNVNVGHCSSIERVYPLVKDILWHSITKYLDQTIEKLFNAMNPVQVNDQKVISFHWQIDIALYTHIKMILKTEALPFTFTLHQFNSIIKGIVNQWCNVSELDDLPLCTEQTDTLVRLEEEGKLAEEYELLISDSEDDD</sequence>
<evidence type="ECO:0000255" key="1">
    <source>
        <dbReference type="HAMAP-Rule" id="MF_04088"/>
    </source>
</evidence>
<organism>
    <name type="scientific">Rotavirus A (isolate RVA/Human/Belgium/B4106/2000/G3P11[14])</name>
    <name type="common">RV-A</name>
    <name type="synonym">Rotavirus A (isolate B4106)</name>
    <dbReference type="NCBI Taxonomy" id="578843"/>
    <lineage>
        <taxon>Viruses</taxon>
        <taxon>Riboviria</taxon>
        <taxon>Orthornavirae</taxon>
        <taxon>Duplornaviricota</taxon>
        <taxon>Resentoviricetes</taxon>
        <taxon>Reovirales</taxon>
        <taxon>Sedoreoviridae</taxon>
        <taxon>Rotavirus</taxon>
        <taxon>Rotavirus A</taxon>
    </lineage>
</organism>
<reference key="1">
    <citation type="journal article" date="2006" name="J. Virol.">
        <title>Full genomic analysis of human rotavirus strain B4106 and lapine rotavirus strain 30/96 provides evidence for interspecies transmission.</title>
        <authorList>
            <person name="Matthijnssens J."/>
            <person name="Rahman M."/>
            <person name="Martella V."/>
            <person name="Xuelei Y."/>
            <person name="De Vos S."/>
            <person name="De Leener K."/>
            <person name="Ciarlet M."/>
            <person name="Buonavoglia C."/>
            <person name="Van Ranst M."/>
        </authorList>
    </citation>
    <scope>NUCLEOTIDE SEQUENCE [GENOMIC RNA]</scope>
</reference>
<name>NSP1_ROT41</name>